<dbReference type="EMBL" id="AY043487">
    <property type="protein sequence ID" value="AAK95397.1"/>
    <property type="molecule type" value="mRNA"/>
</dbReference>
<dbReference type="EMBL" id="AC005005">
    <property type="status" value="NOT_ANNOTATED_CDS"/>
    <property type="molecule type" value="Genomic_DNA"/>
</dbReference>
<dbReference type="EMBL" id="BC013421">
    <property type="protein sequence ID" value="AAH13421.1"/>
    <property type="molecule type" value="mRNA"/>
</dbReference>
<dbReference type="EMBL" id="BC030236">
    <property type="protein sequence ID" value="AAH30236.1"/>
    <property type="molecule type" value="mRNA"/>
</dbReference>
<dbReference type="EMBL" id="BC068004">
    <property type="protein sequence ID" value="AAH68004.1"/>
    <property type="molecule type" value="mRNA"/>
</dbReference>
<dbReference type="CCDS" id="CCDS43003.1"/>
<dbReference type="RefSeq" id="NP_536355.1">
    <property type="nucleotide sequence ID" value="NM_080430.4"/>
</dbReference>
<dbReference type="BioGRID" id="126635">
    <property type="interactions" value="21"/>
</dbReference>
<dbReference type="FunCoup" id="Q8WWX9">
    <property type="interactions" value="131"/>
</dbReference>
<dbReference type="IntAct" id="Q8WWX9">
    <property type="interactions" value="15"/>
</dbReference>
<dbReference type="STRING" id="9606.ENSP00000384564"/>
<dbReference type="GlyGen" id="Q8WWX9">
    <property type="glycosylation" value="1 site, 1 O-linked glycan (1 site)"/>
</dbReference>
<dbReference type="MetOSite" id="Q8WWX9"/>
<dbReference type="PhosphoSitePlus" id="Q8WWX9"/>
<dbReference type="BioMuta" id="SELENOM"/>
<dbReference type="DMDM" id="189034058"/>
<dbReference type="jPOST" id="Q8WWX9"/>
<dbReference type="MassIVE" id="Q8WWX9"/>
<dbReference type="PaxDb" id="9606-ENSP00000384564"/>
<dbReference type="PeptideAtlas" id="Q8WWX9"/>
<dbReference type="ProteomicsDB" id="74954"/>
<dbReference type="Pumba" id="Q8WWX9"/>
<dbReference type="Antibodypedia" id="5738">
    <property type="antibodies" value="134 antibodies from 20 providers"/>
</dbReference>
<dbReference type="DNASU" id="140606"/>
<dbReference type="Ensembl" id="ENST00000400299.6">
    <property type="protein sequence ID" value="ENSP00000383155.2"/>
    <property type="gene ID" value="ENSG00000198832.11"/>
</dbReference>
<dbReference type="Ensembl" id="ENST00000402395.5">
    <property type="protein sequence ID" value="ENSP00000384564.1"/>
    <property type="gene ID" value="ENSG00000198832.11"/>
</dbReference>
<dbReference type="GeneID" id="140606"/>
<dbReference type="KEGG" id="hsa:140606"/>
<dbReference type="MANE-Select" id="ENST00000400299.6">
    <property type="protein sequence ID" value="ENSP00000383155.2"/>
    <property type="RefSeq nucleotide sequence ID" value="NM_080430.4"/>
    <property type="RefSeq protein sequence ID" value="NP_536355.1"/>
</dbReference>
<dbReference type="AGR" id="HGNC:30397"/>
<dbReference type="CTD" id="140606"/>
<dbReference type="DisGeNET" id="140606"/>
<dbReference type="GeneCards" id="SELENOM"/>
<dbReference type="HGNC" id="HGNC:30397">
    <property type="gene designation" value="SELENOM"/>
</dbReference>
<dbReference type="HPA" id="ENSG00000198832">
    <property type="expression patterns" value="Low tissue specificity"/>
</dbReference>
<dbReference type="MIM" id="610918">
    <property type="type" value="gene"/>
</dbReference>
<dbReference type="neXtProt" id="NX_Q8WWX9"/>
<dbReference type="OpenTargets" id="ENSG00000198832"/>
<dbReference type="VEuPathDB" id="HostDB:ENSG00000198832"/>
<dbReference type="eggNOG" id="ENOG502S29K">
    <property type="taxonomic scope" value="Eukaryota"/>
</dbReference>
<dbReference type="GeneTree" id="ENSGT00940000154284"/>
<dbReference type="InParanoid" id="Q8WWX9"/>
<dbReference type="OMA" id="DWNRLHG"/>
<dbReference type="OrthoDB" id="25165at2759"/>
<dbReference type="PAN-GO" id="Q8WWX9">
    <property type="GO annotations" value="2 GO annotations based on evolutionary models"/>
</dbReference>
<dbReference type="PhylomeDB" id="Q8WWX9"/>
<dbReference type="PathwayCommons" id="Q8WWX9"/>
<dbReference type="SignaLink" id="Q8WWX9"/>
<dbReference type="BioGRID-ORCS" id="140606">
    <property type="hits" value="8 hits in 1111 CRISPR screens"/>
</dbReference>
<dbReference type="ChiTaRS" id="SELENOM">
    <property type="organism name" value="human"/>
</dbReference>
<dbReference type="GenomeRNAi" id="140606"/>
<dbReference type="Pharos" id="Q8WWX9">
    <property type="development level" value="Tdark"/>
</dbReference>
<dbReference type="PRO" id="PR:Q8WWX9"/>
<dbReference type="Proteomes" id="UP000005640">
    <property type="component" value="Chromosome 22"/>
</dbReference>
<dbReference type="RNAct" id="Q8WWX9">
    <property type="molecule type" value="protein"/>
</dbReference>
<dbReference type="Bgee" id="ENSG00000198832">
    <property type="expression patterns" value="Expressed in mucosa of stomach and 171 other cell types or tissues"/>
</dbReference>
<dbReference type="ExpressionAtlas" id="Q8WWX9">
    <property type="expression patterns" value="baseline and differential"/>
</dbReference>
<dbReference type="GO" id="GO:0005788">
    <property type="term" value="C:endoplasmic reticulum lumen"/>
    <property type="evidence" value="ECO:0000318"/>
    <property type="project" value="GO_Central"/>
</dbReference>
<dbReference type="GO" id="GO:0005794">
    <property type="term" value="C:Golgi apparatus"/>
    <property type="evidence" value="ECO:0007669"/>
    <property type="project" value="UniProtKB-SubCell"/>
</dbReference>
<dbReference type="GO" id="GO:0048471">
    <property type="term" value="C:perinuclear region of cytoplasm"/>
    <property type="evidence" value="ECO:0007669"/>
    <property type="project" value="UniProtKB-SubCell"/>
</dbReference>
<dbReference type="GO" id="GO:0016491">
    <property type="term" value="F:oxidoreductase activity"/>
    <property type="evidence" value="ECO:0000318"/>
    <property type="project" value="GO_Central"/>
</dbReference>
<dbReference type="GO" id="GO:0060612">
    <property type="term" value="P:adipose tissue development"/>
    <property type="evidence" value="ECO:0007669"/>
    <property type="project" value="Ensembl"/>
</dbReference>
<dbReference type="GO" id="GO:0035934">
    <property type="term" value="P:corticosterone secretion"/>
    <property type="evidence" value="ECO:0007669"/>
    <property type="project" value="Ensembl"/>
</dbReference>
<dbReference type="GO" id="GO:0042445">
    <property type="term" value="P:hormone metabolic process"/>
    <property type="evidence" value="ECO:0007669"/>
    <property type="project" value="Ensembl"/>
</dbReference>
<dbReference type="GO" id="GO:0035264">
    <property type="term" value="P:multicellular organism growth"/>
    <property type="evidence" value="ECO:0007669"/>
    <property type="project" value="Ensembl"/>
</dbReference>
<dbReference type="GO" id="GO:0010269">
    <property type="term" value="P:response to selenium ion"/>
    <property type="evidence" value="ECO:0007669"/>
    <property type="project" value="Ensembl"/>
</dbReference>
<dbReference type="Gene3D" id="3.40.30.50">
    <property type="entry name" value="Sep15/SelM thioredoxin-like domain, active-site redox motif"/>
    <property type="match status" value="1"/>
</dbReference>
<dbReference type="InterPro" id="IPR038219">
    <property type="entry name" value="Sep15/SelM_sf"/>
</dbReference>
<dbReference type="InterPro" id="IPR039992">
    <property type="entry name" value="Sep15_SelM"/>
</dbReference>
<dbReference type="InterPro" id="IPR014912">
    <property type="entry name" value="Sep15_SelM_dom"/>
</dbReference>
<dbReference type="InterPro" id="IPR036249">
    <property type="entry name" value="Thioredoxin-like_sf"/>
</dbReference>
<dbReference type="PANTHER" id="PTHR13077">
    <property type="entry name" value="SELENOPROTEIN F"/>
    <property type="match status" value="1"/>
</dbReference>
<dbReference type="PANTHER" id="PTHR13077:SF7">
    <property type="entry name" value="SELENOPROTEIN M"/>
    <property type="match status" value="1"/>
</dbReference>
<dbReference type="Pfam" id="PF08806">
    <property type="entry name" value="Sep15_SelM"/>
    <property type="match status" value="1"/>
</dbReference>
<dbReference type="SUPFAM" id="SSF52833">
    <property type="entry name" value="Thioredoxin-like"/>
    <property type="match status" value="1"/>
</dbReference>
<keyword id="KW-0963">Cytoplasm</keyword>
<keyword id="KW-0256">Endoplasmic reticulum</keyword>
<keyword id="KW-0333">Golgi apparatus</keyword>
<keyword id="KW-1267">Proteomics identification</keyword>
<keyword id="KW-1185">Reference proteome</keyword>
<keyword id="KW-0712">Selenocysteine</keyword>
<keyword id="KW-0732">Signal</keyword>
<comment type="function">
    <text evidence="1">May function as a thiol-disulfide oxidoreductase that participates in disulfide bond formation.</text>
</comment>
<comment type="interaction">
    <interactant intactId="EBI-10277687">
        <id>Q8WWX9</id>
    </interactant>
    <interactant intactId="EBI-711483">
        <id>P61604</id>
        <label>HSPE1</label>
    </interactant>
    <organismsDiffer>false</organismsDiffer>
    <experiments>3</experiments>
</comment>
<comment type="interaction">
    <interactant intactId="EBI-10277687">
        <id>Q8WWX9</id>
    </interactant>
    <interactant intactId="EBI-11749135">
        <id>Q8IUG1</id>
        <label>KRTAP1-3</label>
    </interactant>
    <organismsDiffer>false</organismsDiffer>
    <experiments>3</experiments>
</comment>
<comment type="interaction">
    <interactant intactId="EBI-10277687">
        <id>Q8WWX9</id>
    </interactant>
    <interactant intactId="EBI-11953334">
        <id>P60328</id>
        <label>KRTAP12-3</label>
    </interactant>
    <organismsDiffer>false</organismsDiffer>
    <experiments>3</experiments>
</comment>
<comment type="interaction">
    <interactant intactId="EBI-10277687">
        <id>Q8WWX9</id>
    </interactant>
    <interactant intactId="EBI-724076">
        <id>Q99750</id>
        <label>MDFI</label>
    </interactant>
    <organismsDiffer>false</organismsDiffer>
    <experiments>3</experiments>
</comment>
<comment type="interaction">
    <interactant intactId="EBI-10277687">
        <id>Q8WWX9</id>
    </interactant>
    <interactant intactId="EBI-742948">
        <id>Q5JR59</id>
        <label>MTUS2</label>
    </interactant>
    <organismsDiffer>false</organismsDiffer>
    <experiments>3</experiments>
</comment>
<comment type="interaction">
    <interactant intactId="EBI-10277687">
        <id>Q8WWX9</id>
    </interactant>
    <interactant intactId="EBI-17702144">
        <id>Q7RTP0</id>
        <label>NIPA1</label>
    </interactant>
    <organismsDiffer>false</organismsDiffer>
    <experiments>3</experiments>
</comment>
<comment type="interaction">
    <interactant intactId="EBI-10277687">
        <id>Q8WWX9</id>
    </interactant>
    <interactant intactId="EBI-945833">
        <id>Q7Z3S9</id>
        <label>NOTCH2NLA</label>
    </interactant>
    <organismsDiffer>false</organismsDiffer>
    <experiments>3</experiments>
</comment>
<comment type="interaction">
    <interactant intactId="EBI-10277687">
        <id>Q8WWX9</id>
    </interactant>
    <interactant intactId="EBI-7545592">
        <id>Q9H6H4</id>
        <label>REEP4</label>
    </interactant>
    <organismsDiffer>false</organismsDiffer>
    <experiments>3</experiments>
</comment>
<comment type="interaction">
    <interactant intactId="EBI-10277687">
        <id>Q8WWX9</id>
    </interactant>
    <interactant intactId="EBI-2855401">
        <id>Q9BY50</id>
        <label>SEC11C</label>
    </interactant>
    <organismsDiffer>false</organismsDiffer>
    <experiments>3</experiments>
</comment>
<comment type="interaction">
    <interactant intactId="EBI-10277687">
        <id>Q8WWX9</id>
    </interactant>
    <interactant intactId="EBI-744081">
        <id>Q96EQ0</id>
        <label>SGTB</label>
    </interactant>
    <organismsDiffer>false</organismsDiffer>
    <experiments>5</experiments>
</comment>
<comment type="subcellular location">
    <subcellularLocation>
        <location evidence="3">Cytoplasm</location>
        <location evidence="3">Perinuclear region</location>
    </subcellularLocation>
    <subcellularLocation>
        <location evidence="7">Endoplasmic reticulum</location>
    </subcellularLocation>
    <subcellularLocation>
        <location evidence="7">Golgi apparatus</location>
    </subcellularLocation>
    <text>Localized to perinuclear structures corresponding to Golgi and endoplasmic reticulum.</text>
</comment>
<comment type="tissue specificity">
    <text evidence="3">Widely expressed.</text>
</comment>
<comment type="similarity">
    <text evidence="6">Belongs to the selenoprotein M/F family.</text>
</comment>
<accession>Q8WWX9</accession>
<accession>A8MPZ2</accession>
<sequence length="145" mass="16232">MSLLLPPLALLLLLAALVAPATAATAYRPDWNRLSGLTRARVETCGGUQLNRLKEVKAFVTQDIPFYHNLVMKHLPGADPELVLLGRRYEELERIPLSEMTREEINALVQELGFYRKAAPDAQVPPEYVWAPAKPPEETSDHADL</sequence>
<protein>
    <recommendedName>
        <fullName evidence="5">Selenoprotein M</fullName>
        <shortName evidence="5">SelM</shortName>
    </recommendedName>
</protein>
<gene>
    <name evidence="5 8" type="primary">SELENOM</name>
    <name evidence="4 5" type="synonym">SELM</name>
</gene>
<reference key="1">
    <citation type="journal article" date="2002" name="Mol. Cell. Biol.">
        <title>Mammalian selenoprotein in which selenocysteine (Sec) incorporation is supported by a new form of Sec insertion sequence element.</title>
        <authorList>
            <person name="Korotkov K.V."/>
            <person name="Novoselov S.V."/>
            <person name="Hatfield D.L."/>
            <person name="Gladyshev V.N."/>
        </authorList>
    </citation>
    <scope>NUCLEOTIDE SEQUENCE [MRNA]</scope>
    <scope>SUBCELLULAR LOCATION</scope>
    <scope>TISSUE SPECIFICITY</scope>
</reference>
<reference key="2">
    <citation type="journal article" date="1999" name="Nature">
        <title>The DNA sequence of human chromosome 22.</title>
        <authorList>
            <person name="Dunham I."/>
            <person name="Hunt A.R."/>
            <person name="Collins J.E."/>
            <person name="Bruskiewich R."/>
            <person name="Beare D.M."/>
            <person name="Clamp M."/>
            <person name="Smink L.J."/>
            <person name="Ainscough R."/>
            <person name="Almeida J.P."/>
            <person name="Babbage A.K."/>
            <person name="Bagguley C."/>
            <person name="Bailey J."/>
            <person name="Barlow K.F."/>
            <person name="Bates K.N."/>
            <person name="Beasley O.P."/>
            <person name="Bird C.P."/>
            <person name="Blakey S.E."/>
            <person name="Bridgeman A.M."/>
            <person name="Buck D."/>
            <person name="Burgess J."/>
            <person name="Burrill W.D."/>
            <person name="Burton J."/>
            <person name="Carder C."/>
            <person name="Carter N.P."/>
            <person name="Chen Y."/>
            <person name="Clark G."/>
            <person name="Clegg S.M."/>
            <person name="Cobley V.E."/>
            <person name="Cole C.G."/>
            <person name="Collier R.E."/>
            <person name="Connor R."/>
            <person name="Conroy D."/>
            <person name="Corby N.R."/>
            <person name="Coville G.J."/>
            <person name="Cox A.V."/>
            <person name="Davis J."/>
            <person name="Dawson E."/>
            <person name="Dhami P.D."/>
            <person name="Dockree C."/>
            <person name="Dodsworth S.J."/>
            <person name="Durbin R.M."/>
            <person name="Ellington A.G."/>
            <person name="Evans K.L."/>
            <person name="Fey J.M."/>
            <person name="Fleming K."/>
            <person name="French L."/>
            <person name="Garner A.A."/>
            <person name="Gilbert J.G.R."/>
            <person name="Goward M.E."/>
            <person name="Grafham D.V."/>
            <person name="Griffiths M.N.D."/>
            <person name="Hall C."/>
            <person name="Hall R.E."/>
            <person name="Hall-Tamlyn G."/>
            <person name="Heathcott R.W."/>
            <person name="Ho S."/>
            <person name="Holmes S."/>
            <person name="Hunt S.E."/>
            <person name="Jones M.C."/>
            <person name="Kershaw J."/>
            <person name="Kimberley A.M."/>
            <person name="King A."/>
            <person name="Laird G.K."/>
            <person name="Langford C.F."/>
            <person name="Leversha M.A."/>
            <person name="Lloyd C."/>
            <person name="Lloyd D.M."/>
            <person name="Martyn I.D."/>
            <person name="Mashreghi-Mohammadi M."/>
            <person name="Matthews L.H."/>
            <person name="Mccann O.T."/>
            <person name="Mcclay J."/>
            <person name="Mclaren S."/>
            <person name="McMurray A.A."/>
            <person name="Milne S.A."/>
            <person name="Mortimore B.J."/>
            <person name="Odell C.N."/>
            <person name="Pavitt R."/>
            <person name="Pearce A.V."/>
            <person name="Pearson D."/>
            <person name="Phillimore B.J.C.T."/>
            <person name="Phillips S.H."/>
            <person name="Plumb R.W."/>
            <person name="Ramsay H."/>
            <person name="Ramsey Y."/>
            <person name="Rogers L."/>
            <person name="Ross M.T."/>
            <person name="Scott C.E."/>
            <person name="Sehra H.K."/>
            <person name="Skuce C.D."/>
            <person name="Smalley S."/>
            <person name="Smith M.L."/>
            <person name="Soderlund C."/>
            <person name="Spragon L."/>
            <person name="Steward C.A."/>
            <person name="Sulston J.E."/>
            <person name="Swann R.M."/>
            <person name="Vaudin M."/>
            <person name="Wall M."/>
            <person name="Wallis J.M."/>
            <person name="Whiteley M.N."/>
            <person name="Willey D.L."/>
            <person name="Williams L."/>
            <person name="Williams S.A."/>
            <person name="Williamson H."/>
            <person name="Wilmer T.E."/>
            <person name="Wilming L."/>
            <person name="Wright C.L."/>
            <person name="Hubbard T."/>
            <person name="Bentley D.R."/>
            <person name="Beck S."/>
            <person name="Rogers J."/>
            <person name="Shimizu N."/>
            <person name="Minoshima S."/>
            <person name="Kawasaki K."/>
            <person name="Sasaki T."/>
            <person name="Asakawa S."/>
            <person name="Kudoh J."/>
            <person name="Shintani A."/>
            <person name="Shibuya K."/>
            <person name="Yoshizaki Y."/>
            <person name="Aoki N."/>
            <person name="Mitsuyama S."/>
            <person name="Roe B.A."/>
            <person name="Chen F."/>
            <person name="Chu L."/>
            <person name="Crabtree J."/>
            <person name="Deschamps S."/>
            <person name="Do A."/>
            <person name="Do T."/>
            <person name="Dorman A."/>
            <person name="Fang F."/>
            <person name="Fu Y."/>
            <person name="Hu P."/>
            <person name="Hua A."/>
            <person name="Kenton S."/>
            <person name="Lai H."/>
            <person name="Lao H.I."/>
            <person name="Lewis J."/>
            <person name="Lewis S."/>
            <person name="Lin S.-P."/>
            <person name="Loh P."/>
            <person name="Malaj E."/>
            <person name="Nguyen T."/>
            <person name="Pan H."/>
            <person name="Phan S."/>
            <person name="Qi S."/>
            <person name="Qian Y."/>
            <person name="Ray L."/>
            <person name="Ren Q."/>
            <person name="Shaull S."/>
            <person name="Sloan D."/>
            <person name="Song L."/>
            <person name="Wang Q."/>
            <person name="Wang Y."/>
            <person name="Wang Z."/>
            <person name="White J."/>
            <person name="Willingham D."/>
            <person name="Wu H."/>
            <person name="Yao Z."/>
            <person name="Zhan M."/>
            <person name="Zhang G."/>
            <person name="Chissoe S."/>
            <person name="Murray J."/>
            <person name="Miller N."/>
            <person name="Minx P."/>
            <person name="Fulton R."/>
            <person name="Johnson D."/>
            <person name="Bemis G."/>
            <person name="Bentley D."/>
            <person name="Bradshaw H."/>
            <person name="Bourne S."/>
            <person name="Cordes M."/>
            <person name="Du Z."/>
            <person name="Fulton L."/>
            <person name="Goela D."/>
            <person name="Graves T."/>
            <person name="Hawkins J."/>
            <person name="Hinds K."/>
            <person name="Kemp K."/>
            <person name="Latreille P."/>
            <person name="Layman D."/>
            <person name="Ozersky P."/>
            <person name="Rohlfing T."/>
            <person name="Scheet P."/>
            <person name="Walker C."/>
            <person name="Wamsley A."/>
            <person name="Wohldmann P."/>
            <person name="Pepin K."/>
            <person name="Nelson J."/>
            <person name="Korf I."/>
            <person name="Bedell J.A."/>
            <person name="Hillier L.W."/>
            <person name="Mardis E."/>
            <person name="Waterston R."/>
            <person name="Wilson R."/>
            <person name="Emanuel B.S."/>
            <person name="Shaikh T."/>
            <person name="Kurahashi H."/>
            <person name="Saitta S."/>
            <person name="Budarf M.L."/>
            <person name="McDermid H.E."/>
            <person name="Johnson A."/>
            <person name="Wong A.C.C."/>
            <person name="Morrow B.E."/>
            <person name="Edelmann L."/>
            <person name="Kim U.J."/>
            <person name="Shizuya H."/>
            <person name="Simon M.I."/>
            <person name="Dumanski J.P."/>
            <person name="Peyrard M."/>
            <person name="Kedra D."/>
            <person name="Seroussi E."/>
            <person name="Fransson I."/>
            <person name="Tapia I."/>
            <person name="Bruder C.E."/>
            <person name="O'Brien K.P."/>
            <person name="Wilkinson P."/>
            <person name="Bodenteich A."/>
            <person name="Hartman K."/>
            <person name="Hu X."/>
            <person name="Khan A.S."/>
            <person name="Lane L."/>
            <person name="Tilahun Y."/>
            <person name="Wright H."/>
        </authorList>
    </citation>
    <scope>NUCLEOTIDE SEQUENCE [LARGE SCALE GENOMIC DNA]</scope>
</reference>
<reference key="3">
    <citation type="journal article" date="2004" name="Genome Res.">
        <title>The status, quality, and expansion of the NIH full-length cDNA project: the Mammalian Gene Collection (MGC).</title>
        <authorList>
            <consortium name="The MGC Project Team"/>
        </authorList>
    </citation>
    <scope>NUCLEOTIDE SEQUENCE [LARGE SCALE MRNA]</scope>
    <source>
        <tissue>Brain</tissue>
        <tissue>Lung</tissue>
    </source>
</reference>
<reference key="4">
    <citation type="journal article" date="2016" name="J. Biol. Chem.">
        <title>Selenoprotein gene nomenclature.</title>
        <authorList>
            <person name="Gladyshev V.N."/>
            <person name="Arner E.S."/>
            <person name="Berry M.J."/>
            <person name="Brigelius-Flohe R."/>
            <person name="Bruford E.A."/>
            <person name="Burk R.F."/>
            <person name="Carlson B.A."/>
            <person name="Castellano S."/>
            <person name="Chavatte L."/>
            <person name="Conrad M."/>
            <person name="Copeland P.R."/>
            <person name="Diamond A.M."/>
            <person name="Driscoll D.M."/>
            <person name="Ferreiro A."/>
            <person name="Flohe L."/>
            <person name="Green F.R."/>
            <person name="Guigo R."/>
            <person name="Handy D.E."/>
            <person name="Hatfield D.L."/>
            <person name="Hesketh J."/>
            <person name="Hoffmann P.R."/>
            <person name="Holmgren A."/>
            <person name="Hondal R.J."/>
            <person name="Howard M.T."/>
            <person name="Huang K."/>
            <person name="Kim H.Y."/>
            <person name="Kim I.Y."/>
            <person name="Koehrle J."/>
            <person name="Krol A."/>
            <person name="Kryukov G.V."/>
            <person name="Lee B.J."/>
            <person name="Lee B.C."/>
            <person name="Lei X.G."/>
            <person name="Liu Q."/>
            <person name="Lescure A."/>
            <person name="Lobanov A.V."/>
            <person name="Loscalzo J."/>
            <person name="Maiorino M."/>
            <person name="Mariotti M."/>
            <person name="Sandeep Prabhu K."/>
            <person name="Rayman M.P."/>
            <person name="Rozovsky S."/>
            <person name="Salinas G."/>
            <person name="Schmidt E.E."/>
            <person name="Schomburg L."/>
            <person name="Schweizer U."/>
            <person name="Simonovic M."/>
            <person name="Sunde R.A."/>
            <person name="Tsuji P.A."/>
            <person name="Tweedie S."/>
            <person name="Ursini F."/>
            <person name="Whanger P.D."/>
            <person name="Zhang Y."/>
        </authorList>
    </citation>
    <scope>NOMENCLATURE</scope>
</reference>
<evidence type="ECO:0000250" key="1"/>
<evidence type="ECO:0000255" key="2"/>
<evidence type="ECO:0000269" key="3">
    <source>
    </source>
</evidence>
<evidence type="ECO:0000303" key="4">
    <source>
    </source>
</evidence>
<evidence type="ECO:0000303" key="5">
    <source>
    </source>
</evidence>
<evidence type="ECO:0000305" key="6"/>
<evidence type="ECO:0000305" key="7">
    <source>
    </source>
</evidence>
<evidence type="ECO:0000312" key="8">
    <source>
        <dbReference type="HGNC" id="HGNC:30397"/>
    </source>
</evidence>
<proteinExistence type="evidence at protein level"/>
<organism>
    <name type="scientific">Homo sapiens</name>
    <name type="common">Human</name>
    <dbReference type="NCBI Taxonomy" id="9606"/>
    <lineage>
        <taxon>Eukaryota</taxon>
        <taxon>Metazoa</taxon>
        <taxon>Chordata</taxon>
        <taxon>Craniata</taxon>
        <taxon>Vertebrata</taxon>
        <taxon>Euteleostomi</taxon>
        <taxon>Mammalia</taxon>
        <taxon>Eutheria</taxon>
        <taxon>Euarchontoglires</taxon>
        <taxon>Primates</taxon>
        <taxon>Haplorrhini</taxon>
        <taxon>Catarrhini</taxon>
        <taxon>Hominidae</taxon>
        <taxon>Homo</taxon>
    </lineage>
</organism>
<name>SELM_HUMAN</name>
<feature type="signal peptide" evidence="2">
    <location>
        <begin position="1"/>
        <end position="23"/>
    </location>
</feature>
<feature type="chain" id="PRO_0000022298" description="Selenoprotein M">
    <location>
        <begin position="24"/>
        <end position="145"/>
    </location>
</feature>
<feature type="active site" description="Nucleophile" evidence="1">
    <location>
        <position position="45"/>
    </location>
</feature>
<feature type="active site" description="Nucleophile" evidence="1">
    <location>
        <position position="48"/>
    </location>
</feature>
<feature type="non-standard amino acid" description="Selenocysteine">
    <location>
        <position position="48"/>
    </location>
</feature>
<feature type="cross-link" description="Cysteinyl-selenocysteine (Cys-Sec)" evidence="2">
    <location>
        <begin position="45"/>
        <end position="48"/>
    </location>
</feature>